<comment type="function">
    <text evidence="2">Insecticidal toxin that induces reversible paralysis in crickets but not in cockroaches and mice. Molecular target unknown.</text>
</comment>
<comment type="subcellular location">
    <subcellularLocation>
        <location evidence="2">Secreted</location>
    </subcellularLocation>
</comment>
<comment type="tissue specificity">
    <text evidence="5">Expressed by the venom gland.</text>
</comment>
<comment type="domain">
    <text evidence="1">The presence of a 'disulfide through disulfide knot' structurally defines this protein as a knottin.</text>
</comment>
<comment type="mass spectrometry"/>
<comment type="similarity">
    <text>Belongs to the neurotoxin 10 (Hwtx-1) family.</text>
</comment>
<keyword id="KW-0903">Direct protein sequencing</keyword>
<keyword id="KW-1015">Disulfide bond</keyword>
<keyword id="KW-0960">Knottin</keyword>
<keyword id="KW-0964">Secreted</keyword>
<keyword id="KW-0800">Toxin</keyword>
<organism>
    <name type="scientific">Coremiocnemis valida</name>
    <name type="common">Singapore tarantula</name>
    <name type="synonym">Blue femur tarantula</name>
    <dbReference type="NCBI Taxonomy" id="129522"/>
    <lineage>
        <taxon>Eukaryota</taxon>
        <taxon>Metazoa</taxon>
        <taxon>Ecdysozoa</taxon>
        <taxon>Arthropoda</taxon>
        <taxon>Chelicerata</taxon>
        <taxon>Arachnida</taxon>
        <taxon>Araneae</taxon>
        <taxon>Mygalomorphae</taxon>
        <taxon>Theraphosidae</taxon>
        <taxon>Coremiocnemis</taxon>
    </lineage>
</organism>
<sequence>ACSRAGENCYKSGRCCDGLYCKAYVVTCYKP</sequence>
<feature type="peptide" id="PRO_0000045030" description="U1-theraphotoxin-Cv1a" evidence="2">
    <location>
        <begin position="1"/>
        <end position="31"/>
    </location>
</feature>
<feature type="disulfide bond" evidence="1">
    <location>
        <begin position="2"/>
        <end position="16"/>
    </location>
</feature>
<feature type="disulfide bond" evidence="1">
    <location>
        <begin position="9"/>
        <end position="21"/>
    </location>
</feature>
<feature type="disulfide bond" evidence="1">
    <location>
        <begin position="15"/>
        <end position="28"/>
    </location>
</feature>
<proteinExistence type="evidence at protein level"/>
<protein>
    <recommendedName>
        <fullName evidence="4">U1-theraphotoxin-Cv1a</fullName>
        <shortName evidence="4">U1-TRTX-Cv1a</shortName>
    </recommendedName>
    <alternativeName>
        <fullName evidence="4">Covalitoxin-2</fullName>
    </alternativeName>
    <alternativeName>
        <fullName evidence="3">Covalitoxin-II</fullName>
        <shortName evidence="3">CvTx-II</shortName>
    </alternativeName>
</protein>
<accession>P82601</accession>
<name>NTA_CORVA</name>
<dbReference type="SMR" id="P82601"/>
<dbReference type="ArachnoServer" id="AS000422">
    <property type="toxin name" value="U1-theraphotoxin-Cv1a"/>
</dbReference>
<dbReference type="GO" id="GO:0005576">
    <property type="term" value="C:extracellular region"/>
    <property type="evidence" value="ECO:0007669"/>
    <property type="project" value="UniProtKB-SubCell"/>
</dbReference>
<dbReference type="GO" id="GO:0090729">
    <property type="term" value="F:toxin activity"/>
    <property type="evidence" value="ECO:0007669"/>
    <property type="project" value="UniProtKB-KW"/>
</dbReference>
<reference key="1">
    <citation type="journal article" date="2000" name="FEBS Lett.">
        <title>Purification, structure determination and synthesis of covalitoxin-II, a short insect-specific neurotoxic peptide from the venom of the Coremiocnemis validus (Singapore tarantula).</title>
        <authorList>
            <person name="Balaji R.A."/>
            <person name="Sasaki T."/>
            <person name="Gopalakrishnakone P."/>
            <person name="Sato K."/>
            <person name="Kini R.M."/>
            <person name="Bay B.-H."/>
        </authorList>
    </citation>
    <scope>PROTEIN SEQUENCE</scope>
    <scope>BIOASSAY</scope>
    <scope>SUBCELLULAR LOCATION</scope>
    <scope>MASS SPECTROMETRY</scope>
    <source>
        <tissue>Venom</tissue>
    </source>
</reference>
<evidence type="ECO:0000250" key="1">
    <source>
        <dbReference type="UniProtKB" id="P60590"/>
    </source>
</evidence>
<evidence type="ECO:0000269" key="2">
    <source>
    </source>
</evidence>
<evidence type="ECO:0000303" key="3">
    <source>
    </source>
</evidence>
<evidence type="ECO:0000305" key="4"/>
<evidence type="ECO:0000305" key="5">
    <source>
    </source>
</evidence>